<proteinExistence type="inferred from homology"/>
<keyword id="KW-0963">Cytoplasm</keyword>
<keyword id="KW-0489">Methyltransferase</keyword>
<keyword id="KW-0949">S-adenosyl-L-methionine</keyword>
<keyword id="KW-0808">Transferase</keyword>
<evidence type="ECO:0000255" key="1">
    <source>
        <dbReference type="HAMAP-Rule" id="MF_00735"/>
    </source>
</evidence>
<evidence type="ECO:0000305" key="2"/>
<dbReference type="EC" id="2.1.1.-" evidence="1"/>
<dbReference type="EMBL" id="AE003849">
    <property type="protein sequence ID" value="AAF85000.1"/>
    <property type="status" value="ALT_INIT"/>
    <property type="molecule type" value="Genomic_DNA"/>
</dbReference>
<dbReference type="PIR" id="E82586">
    <property type="entry name" value="E82586"/>
</dbReference>
<dbReference type="RefSeq" id="WP_010894649.1">
    <property type="nucleotide sequence ID" value="NC_002488.3"/>
</dbReference>
<dbReference type="SMR" id="Q9PBE3"/>
<dbReference type="STRING" id="160492.XF_2201"/>
<dbReference type="KEGG" id="xfa:XF_2201"/>
<dbReference type="eggNOG" id="COG2264">
    <property type="taxonomic scope" value="Bacteria"/>
</dbReference>
<dbReference type="HOGENOM" id="CLU_049382_4_1_6"/>
<dbReference type="Proteomes" id="UP000000812">
    <property type="component" value="Chromosome"/>
</dbReference>
<dbReference type="GO" id="GO:0005829">
    <property type="term" value="C:cytosol"/>
    <property type="evidence" value="ECO:0007669"/>
    <property type="project" value="TreeGrafter"/>
</dbReference>
<dbReference type="GO" id="GO:0016279">
    <property type="term" value="F:protein-lysine N-methyltransferase activity"/>
    <property type="evidence" value="ECO:0007669"/>
    <property type="project" value="TreeGrafter"/>
</dbReference>
<dbReference type="GO" id="GO:0032259">
    <property type="term" value="P:methylation"/>
    <property type="evidence" value="ECO:0007669"/>
    <property type="project" value="UniProtKB-KW"/>
</dbReference>
<dbReference type="CDD" id="cd02440">
    <property type="entry name" value="AdoMet_MTases"/>
    <property type="match status" value="1"/>
</dbReference>
<dbReference type="Gene3D" id="3.40.50.150">
    <property type="entry name" value="Vaccinia Virus protein VP39"/>
    <property type="match status" value="1"/>
</dbReference>
<dbReference type="HAMAP" id="MF_00735">
    <property type="entry name" value="Methyltr_PrmA"/>
    <property type="match status" value="1"/>
</dbReference>
<dbReference type="InterPro" id="IPR050078">
    <property type="entry name" value="Ribosomal_L11_MeTrfase_PrmA"/>
</dbReference>
<dbReference type="InterPro" id="IPR004498">
    <property type="entry name" value="Ribosomal_PrmA_MeTrfase"/>
</dbReference>
<dbReference type="InterPro" id="IPR029063">
    <property type="entry name" value="SAM-dependent_MTases_sf"/>
</dbReference>
<dbReference type="NCBIfam" id="TIGR00406">
    <property type="entry name" value="prmA"/>
    <property type="match status" value="1"/>
</dbReference>
<dbReference type="PANTHER" id="PTHR43648">
    <property type="entry name" value="ELECTRON TRANSFER FLAVOPROTEIN BETA SUBUNIT LYSINE METHYLTRANSFERASE"/>
    <property type="match status" value="1"/>
</dbReference>
<dbReference type="PANTHER" id="PTHR43648:SF1">
    <property type="entry name" value="ELECTRON TRANSFER FLAVOPROTEIN BETA SUBUNIT LYSINE METHYLTRANSFERASE"/>
    <property type="match status" value="1"/>
</dbReference>
<dbReference type="Pfam" id="PF06325">
    <property type="entry name" value="PrmA"/>
    <property type="match status" value="1"/>
</dbReference>
<dbReference type="PIRSF" id="PIRSF000401">
    <property type="entry name" value="RPL11_MTase"/>
    <property type="match status" value="1"/>
</dbReference>
<dbReference type="SUPFAM" id="SSF53335">
    <property type="entry name" value="S-adenosyl-L-methionine-dependent methyltransferases"/>
    <property type="match status" value="1"/>
</dbReference>
<comment type="function">
    <text evidence="1">Methylates ribosomal protein L11.</text>
</comment>
<comment type="catalytic activity">
    <reaction evidence="1">
        <text>L-lysyl-[protein] + 3 S-adenosyl-L-methionine = N(6),N(6),N(6)-trimethyl-L-lysyl-[protein] + 3 S-adenosyl-L-homocysteine + 3 H(+)</text>
        <dbReference type="Rhea" id="RHEA:54192"/>
        <dbReference type="Rhea" id="RHEA-COMP:9752"/>
        <dbReference type="Rhea" id="RHEA-COMP:13826"/>
        <dbReference type="ChEBI" id="CHEBI:15378"/>
        <dbReference type="ChEBI" id="CHEBI:29969"/>
        <dbReference type="ChEBI" id="CHEBI:57856"/>
        <dbReference type="ChEBI" id="CHEBI:59789"/>
        <dbReference type="ChEBI" id="CHEBI:61961"/>
    </reaction>
</comment>
<comment type="subcellular location">
    <subcellularLocation>
        <location evidence="1">Cytoplasm</location>
    </subcellularLocation>
</comment>
<comment type="similarity">
    <text evidence="1">Belongs to the methyltransferase superfamily. PrmA family.</text>
</comment>
<comment type="sequence caution" evidence="2">
    <conflict type="erroneous initiation">
        <sequence resource="EMBL-CDS" id="AAF85000"/>
    </conflict>
</comment>
<organism>
    <name type="scientific">Xylella fastidiosa (strain 9a5c)</name>
    <dbReference type="NCBI Taxonomy" id="160492"/>
    <lineage>
        <taxon>Bacteria</taxon>
        <taxon>Pseudomonadati</taxon>
        <taxon>Pseudomonadota</taxon>
        <taxon>Gammaproteobacteria</taxon>
        <taxon>Lysobacterales</taxon>
        <taxon>Lysobacteraceae</taxon>
        <taxon>Xylella</taxon>
    </lineage>
</organism>
<name>PRMA_XYLFA</name>
<feature type="chain" id="PRO_0000192337" description="Ribosomal protein L11 methyltransferase">
    <location>
        <begin position="1"/>
        <end position="306"/>
    </location>
</feature>
<feature type="binding site" evidence="1">
    <location>
        <position position="154"/>
    </location>
    <ligand>
        <name>S-adenosyl-L-methionine</name>
        <dbReference type="ChEBI" id="CHEBI:59789"/>
    </ligand>
</feature>
<feature type="binding site" evidence="1">
    <location>
        <position position="179"/>
    </location>
    <ligand>
        <name>S-adenosyl-L-methionine</name>
        <dbReference type="ChEBI" id="CHEBI:59789"/>
    </ligand>
</feature>
<feature type="binding site" evidence="1">
    <location>
        <position position="201"/>
    </location>
    <ligand>
        <name>S-adenosyl-L-methionine</name>
        <dbReference type="ChEBI" id="CHEBI:59789"/>
    </ligand>
</feature>
<feature type="binding site" evidence="1">
    <location>
        <position position="242"/>
    </location>
    <ligand>
        <name>S-adenosyl-L-methionine</name>
        <dbReference type="ChEBI" id="CHEBI:59789"/>
    </ligand>
</feature>
<sequence length="306" mass="32838">MAFLEVSVQCQGRSQARYEEVLESFGALAVTLLDADADTVRERGVFEPGVGETVLWDVVVLSALFPVETDALGLLAGLEGAEPGLDWGGVRFRVVVDEDWERVWMDQFQPMRFGERTFIVPWNQAVPVEASGMDAAVVRLDPGLAFGSGTHPTTGLCLRWLDRLGGDGVLGGGEVLDFGCGSGILALAALKLGAVYAVGVDNDPQALLASRENALRNGVAERLEVYLPAEAPVRRYPVVVANILASTLVALAERLAGCVAPGGRLALSGILRGEEKEVLRCYAVWLDVLGCEEEDGWIRIDGVRRC</sequence>
<protein>
    <recommendedName>
        <fullName evidence="1">Ribosomal protein L11 methyltransferase</fullName>
        <shortName evidence="1">L11 Mtase</shortName>
        <ecNumber evidence="1">2.1.1.-</ecNumber>
    </recommendedName>
</protein>
<gene>
    <name evidence="1" type="primary">prmA</name>
    <name type="ordered locus">XF_2201</name>
</gene>
<accession>Q9PBE3</accession>
<reference key="1">
    <citation type="journal article" date="2000" name="Nature">
        <title>The genome sequence of the plant pathogen Xylella fastidiosa.</title>
        <authorList>
            <person name="Simpson A.J.G."/>
            <person name="Reinach F.C."/>
            <person name="Arruda P."/>
            <person name="Abreu F.A."/>
            <person name="Acencio M."/>
            <person name="Alvarenga R."/>
            <person name="Alves L.M.C."/>
            <person name="Araya J.E."/>
            <person name="Baia G.S."/>
            <person name="Baptista C.S."/>
            <person name="Barros M.H."/>
            <person name="Bonaccorsi E.D."/>
            <person name="Bordin S."/>
            <person name="Bove J.M."/>
            <person name="Briones M.R.S."/>
            <person name="Bueno M.R.P."/>
            <person name="Camargo A.A."/>
            <person name="Camargo L.E.A."/>
            <person name="Carraro D.M."/>
            <person name="Carrer H."/>
            <person name="Colauto N.B."/>
            <person name="Colombo C."/>
            <person name="Costa F.F."/>
            <person name="Costa M.C.R."/>
            <person name="Costa-Neto C.M."/>
            <person name="Coutinho L.L."/>
            <person name="Cristofani M."/>
            <person name="Dias-Neto E."/>
            <person name="Docena C."/>
            <person name="El-Dorry H."/>
            <person name="Facincani A.P."/>
            <person name="Ferreira A.J.S."/>
            <person name="Ferreira V.C.A."/>
            <person name="Ferro J.A."/>
            <person name="Fraga J.S."/>
            <person name="Franca S.C."/>
            <person name="Franco M.C."/>
            <person name="Frohme M."/>
            <person name="Furlan L.R."/>
            <person name="Garnier M."/>
            <person name="Goldman G.H."/>
            <person name="Goldman M.H.S."/>
            <person name="Gomes S.L."/>
            <person name="Gruber A."/>
            <person name="Ho P.L."/>
            <person name="Hoheisel J.D."/>
            <person name="Junqueira M.L."/>
            <person name="Kemper E.L."/>
            <person name="Kitajima J.P."/>
            <person name="Krieger J.E."/>
            <person name="Kuramae E.E."/>
            <person name="Laigret F."/>
            <person name="Lambais M.R."/>
            <person name="Leite L.C.C."/>
            <person name="Lemos E.G.M."/>
            <person name="Lemos M.V.F."/>
            <person name="Lopes S.A."/>
            <person name="Lopes C.R."/>
            <person name="Machado J.A."/>
            <person name="Machado M.A."/>
            <person name="Madeira A.M.B.N."/>
            <person name="Madeira H.M.F."/>
            <person name="Marino C.L."/>
            <person name="Marques M.V."/>
            <person name="Martins E.A.L."/>
            <person name="Martins E.M.F."/>
            <person name="Matsukuma A.Y."/>
            <person name="Menck C.F.M."/>
            <person name="Miracca E.C."/>
            <person name="Miyaki C.Y."/>
            <person name="Monteiro-Vitorello C.B."/>
            <person name="Moon D.H."/>
            <person name="Nagai M.A."/>
            <person name="Nascimento A.L.T.O."/>
            <person name="Netto L.E.S."/>
            <person name="Nhani A. Jr."/>
            <person name="Nobrega F.G."/>
            <person name="Nunes L.R."/>
            <person name="Oliveira M.A."/>
            <person name="de Oliveira M.C."/>
            <person name="de Oliveira R.C."/>
            <person name="Palmieri D.A."/>
            <person name="Paris A."/>
            <person name="Peixoto B.R."/>
            <person name="Pereira G.A.G."/>
            <person name="Pereira H.A. Jr."/>
            <person name="Pesquero J.B."/>
            <person name="Quaggio R.B."/>
            <person name="Roberto P.G."/>
            <person name="Rodrigues V."/>
            <person name="de Rosa A.J.M."/>
            <person name="de Rosa V.E. Jr."/>
            <person name="de Sa R.G."/>
            <person name="Santelli R.V."/>
            <person name="Sawasaki H.E."/>
            <person name="da Silva A.C.R."/>
            <person name="da Silva A.M."/>
            <person name="da Silva F.R."/>
            <person name="Silva W.A. Jr."/>
            <person name="da Silveira J.F."/>
            <person name="Silvestri M.L.Z."/>
            <person name="Siqueira W.J."/>
            <person name="de Souza A.A."/>
            <person name="de Souza A.P."/>
            <person name="Terenzi M.F."/>
            <person name="Truffi D."/>
            <person name="Tsai S.M."/>
            <person name="Tsuhako M.H."/>
            <person name="Vallada H."/>
            <person name="Van Sluys M.A."/>
            <person name="Verjovski-Almeida S."/>
            <person name="Vettore A.L."/>
            <person name="Zago M.A."/>
            <person name="Zatz M."/>
            <person name="Meidanis J."/>
            <person name="Setubal J.C."/>
        </authorList>
    </citation>
    <scope>NUCLEOTIDE SEQUENCE [LARGE SCALE GENOMIC DNA]</scope>
    <source>
        <strain>9a5c</strain>
    </source>
</reference>